<organism>
    <name type="scientific">Staphylococcus aureus (strain USA300 / TCH1516)</name>
    <dbReference type="NCBI Taxonomy" id="451516"/>
    <lineage>
        <taxon>Bacteria</taxon>
        <taxon>Bacillati</taxon>
        <taxon>Bacillota</taxon>
        <taxon>Bacilli</taxon>
        <taxon>Bacillales</taxon>
        <taxon>Staphylococcaceae</taxon>
        <taxon>Staphylococcus</taxon>
    </lineage>
</organism>
<proteinExistence type="inferred from homology"/>
<sequence length="329" mass="35181">MFSLSFIVIAVIIVVALLILFSFVPIGLWISALAAGVHVGIGTLVGMRLRRVSPRKVIAPLIKAHKAGLALTTNQLESHYLAGGNVDRVVDANIAAQRADIDLPFERAAAIDLAGRDVLEAVQMSVNPKVIETPFIAGVAMNGIEVKAKARITVRANIARLVGGAGEETIIARVGEGIVSTIGSSKHHTEVLENPDNISKTVLSKGLDSGTAFEILSIDIADVDISKNIGADLQTEQALADKNIAQAKAEERRAMAVATEQEMKARVQEMHAKVVEAESEVPLAMAEALRSGNISVKDYYNLKNIEADTGMRNAINKRTDQSDDESPEH</sequence>
<reference key="1">
    <citation type="journal article" date="2007" name="BMC Microbiol.">
        <title>Subtle genetic changes enhance virulence of methicillin resistant and sensitive Staphylococcus aureus.</title>
        <authorList>
            <person name="Highlander S.K."/>
            <person name="Hulten K.G."/>
            <person name="Qin X."/>
            <person name="Jiang H."/>
            <person name="Yerrapragada S."/>
            <person name="Mason E.O. Jr."/>
            <person name="Shang Y."/>
            <person name="Williams T.M."/>
            <person name="Fortunov R.M."/>
            <person name="Liu Y."/>
            <person name="Igboeli O."/>
            <person name="Petrosino J."/>
            <person name="Tirumalai M."/>
            <person name="Uzman A."/>
            <person name="Fox G.E."/>
            <person name="Cardenas A.M."/>
            <person name="Muzny D.M."/>
            <person name="Hemphill L."/>
            <person name="Ding Y."/>
            <person name="Dugan S."/>
            <person name="Blyth P.R."/>
            <person name="Buhay C.J."/>
            <person name="Dinh H.H."/>
            <person name="Hawes A.C."/>
            <person name="Holder M."/>
            <person name="Kovar C.L."/>
            <person name="Lee S.L."/>
            <person name="Liu W."/>
            <person name="Nazareth L.V."/>
            <person name="Wang Q."/>
            <person name="Zhou J."/>
            <person name="Kaplan S.L."/>
            <person name="Weinstock G.M."/>
        </authorList>
    </citation>
    <scope>NUCLEOTIDE SEQUENCE [LARGE SCALE GENOMIC DNA]</scope>
    <source>
        <strain>USA300 / TCH1516</strain>
    </source>
</reference>
<comment type="function">
    <text evidence="1">Found in functional membrane microdomains (FMM) that may be equivalent to eukaryotic membrane rafts. FMMs are highly dynamic and increase in number as cells age. Flotillins are thought to be important factors in membrane fluidity.</text>
</comment>
<comment type="subunit">
    <text evidence="1">Homooligomerizes.</text>
</comment>
<comment type="subcellular location">
    <subcellularLocation>
        <location evidence="1">Cell membrane</location>
        <topology evidence="1">Multi-pass membrane protein</topology>
    </subcellularLocation>
    <subcellularLocation>
        <location evidence="1">Membrane raft</location>
        <topology evidence="1">Multi-pass membrane protein</topology>
    </subcellularLocation>
</comment>
<comment type="similarity">
    <text evidence="1">Belongs to the flotillin-like FloA family.</text>
</comment>
<protein>
    <recommendedName>
        <fullName evidence="1">Flotillin-like protein FloA</fullName>
    </recommendedName>
</protein>
<keyword id="KW-1003">Cell membrane</keyword>
<keyword id="KW-0472">Membrane</keyword>
<keyword id="KW-0812">Transmembrane</keyword>
<keyword id="KW-1133">Transmembrane helix</keyword>
<feature type="chain" id="PRO_1000087814" description="Flotillin-like protein FloA">
    <location>
        <begin position="1"/>
        <end position="329"/>
    </location>
</feature>
<feature type="transmembrane region" description="Helical" evidence="1">
    <location>
        <begin position="6"/>
        <end position="26"/>
    </location>
</feature>
<feature type="transmembrane region" description="Helical" evidence="1">
    <location>
        <begin position="27"/>
        <end position="47"/>
    </location>
</feature>
<accession>A8Z4B2</accession>
<dbReference type="EMBL" id="CP000730">
    <property type="protein sequence ID" value="ABX29581.1"/>
    <property type="molecule type" value="Genomic_DNA"/>
</dbReference>
<dbReference type="RefSeq" id="WP_000492114.1">
    <property type="nucleotide sequence ID" value="NC_010079.1"/>
</dbReference>
<dbReference type="SMR" id="A8Z4B2"/>
<dbReference type="GeneID" id="98345944"/>
<dbReference type="KEGG" id="sax:USA300HOU_1574"/>
<dbReference type="HOGENOM" id="CLU_836378_0_0_9"/>
<dbReference type="BioCyc" id="SAUR451516-HMP:GTV5-1593-MONOMER"/>
<dbReference type="GO" id="GO:0045121">
    <property type="term" value="C:membrane raft"/>
    <property type="evidence" value="ECO:0007669"/>
    <property type="project" value="UniProtKB-SubCell"/>
</dbReference>
<dbReference type="GO" id="GO:0005886">
    <property type="term" value="C:plasma membrane"/>
    <property type="evidence" value="ECO:0007669"/>
    <property type="project" value="UniProtKB-SubCell"/>
</dbReference>
<dbReference type="HAMAP" id="MF_01562">
    <property type="entry name" value="FloA"/>
    <property type="match status" value="1"/>
</dbReference>
<dbReference type="InterPro" id="IPR022853">
    <property type="entry name" value="FloA"/>
</dbReference>
<dbReference type="NCBIfam" id="NF010186">
    <property type="entry name" value="PRK13665.1"/>
    <property type="match status" value="1"/>
</dbReference>
<dbReference type="Pfam" id="PF12127">
    <property type="entry name" value="FloA"/>
    <property type="match status" value="1"/>
</dbReference>
<name>FLOA_STAAT</name>
<evidence type="ECO:0000255" key="1">
    <source>
        <dbReference type="HAMAP-Rule" id="MF_01562"/>
    </source>
</evidence>
<gene>
    <name evidence="1" type="primary">floA</name>
    <name type="ordered locus">USA300HOU_1574</name>
</gene>